<feature type="chain" id="PRO_0000124327" description="Small ribosomal subunit protein uS7">
    <location>
        <begin position="1"/>
        <end position="156"/>
    </location>
</feature>
<organism>
    <name type="scientific">Rhizobium meliloti (strain 1021)</name>
    <name type="common">Ensifer meliloti</name>
    <name type="synonym">Sinorhizobium meliloti</name>
    <dbReference type="NCBI Taxonomy" id="266834"/>
    <lineage>
        <taxon>Bacteria</taxon>
        <taxon>Pseudomonadati</taxon>
        <taxon>Pseudomonadota</taxon>
        <taxon>Alphaproteobacteria</taxon>
        <taxon>Hyphomicrobiales</taxon>
        <taxon>Rhizobiaceae</taxon>
        <taxon>Sinorhizobium/Ensifer group</taxon>
        <taxon>Sinorhizobium</taxon>
    </lineage>
</organism>
<dbReference type="EMBL" id="AL591688">
    <property type="protein sequence ID" value="CAC45931.1"/>
    <property type="molecule type" value="Genomic_DNA"/>
</dbReference>
<dbReference type="RefSeq" id="NP_385458.1">
    <property type="nucleotide sequence ID" value="NC_003047.1"/>
</dbReference>
<dbReference type="RefSeq" id="WP_003536198.1">
    <property type="nucleotide sequence ID" value="NC_003047.1"/>
</dbReference>
<dbReference type="SMR" id="Q92QH3"/>
<dbReference type="EnsemblBacteria" id="CAC45931">
    <property type="protein sequence ID" value="CAC45931"/>
    <property type="gene ID" value="SMc01313"/>
</dbReference>
<dbReference type="GeneID" id="89575676"/>
<dbReference type="KEGG" id="sme:SMc01313"/>
<dbReference type="PATRIC" id="fig|266834.11.peg.2767"/>
<dbReference type="eggNOG" id="COG0049">
    <property type="taxonomic scope" value="Bacteria"/>
</dbReference>
<dbReference type="HOGENOM" id="CLU_072226_1_1_5"/>
<dbReference type="OrthoDB" id="9807653at2"/>
<dbReference type="Proteomes" id="UP000001976">
    <property type="component" value="Chromosome"/>
</dbReference>
<dbReference type="GO" id="GO:0015935">
    <property type="term" value="C:small ribosomal subunit"/>
    <property type="evidence" value="ECO:0007669"/>
    <property type="project" value="InterPro"/>
</dbReference>
<dbReference type="GO" id="GO:0019843">
    <property type="term" value="F:rRNA binding"/>
    <property type="evidence" value="ECO:0007669"/>
    <property type="project" value="UniProtKB-UniRule"/>
</dbReference>
<dbReference type="GO" id="GO:0003735">
    <property type="term" value="F:structural constituent of ribosome"/>
    <property type="evidence" value="ECO:0007669"/>
    <property type="project" value="InterPro"/>
</dbReference>
<dbReference type="GO" id="GO:0000049">
    <property type="term" value="F:tRNA binding"/>
    <property type="evidence" value="ECO:0007669"/>
    <property type="project" value="UniProtKB-UniRule"/>
</dbReference>
<dbReference type="GO" id="GO:0006412">
    <property type="term" value="P:translation"/>
    <property type="evidence" value="ECO:0007669"/>
    <property type="project" value="UniProtKB-UniRule"/>
</dbReference>
<dbReference type="CDD" id="cd14869">
    <property type="entry name" value="uS7_Bacteria"/>
    <property type="match status" value="1"/>
</dbReference>
<dbReference type="FunFam" id="1.10.455.10:FF:000001">
    <property type="entry name" value="30S ribosomal protein S7"/>
    <property type="match status" value="1"/>
</dbReference>
<dbReference type="Gene3D" id="1.10.455.10">
    <property type="entry name" value="Ribosomal protein S7 domain"/>
    <property type="match status" value="1"/>
</dbReference>
<dbReference type="HAMAP" id="MF_00480_B">
    <property type="entry name" value="Ribosomal_uS7_B"/>
    <property type="match status" value="1"/>
</dbReference>
<dbReference type="InterPro" id="IPR000235">
    <property type="entry name" value="Ribosomal_uS7"/>
</dbReference>
<dbReference type="InterPro" id="IPR005717">
    <property type="entry name" value="Ribosomal_uS7_bac/org-type"/>
</dbReference>
<dbReference type="InterPro" id="IPR020606">
    <property type="entry name" value="Ribosomal_uS7_CS"/>
</dbReference>
<dbReference type="InterPro" id="IPR023798">
    <property type="entry name" value="Ribosomal_uS7_dom"/>
</dbReference>
<dbReference type="InterPro" id="IPR036823">
    <property type="entry name" value="Ribosomal_uS7_dom_sf"/>
</dbReference>
<dbReference type="NCBIfam" id="TIGR01029">
    <property type="entry name" value="rpsG_bact"/>
    <property type="match status" value="1"/>
</dbReference>
<dbReference type="PANTHER" id="PTHR11205">
    <property type="entry name" value="RIBOSOMAL PROTEIN S7"/>
    <property type="match status" value="1"/>
</dbReference>
<dbReference type="Pfam" id="PF00177">
    <property type="entry name" value="Ribosomal_S7"/>
    <property type="match status" value="1"/>
</dbReference>
<dbReference type="PIRSF" id="PIRSF002122">
    <property type="entry name" value="RPS7p_RPS7a_RPS5e_RPS7o"/>
    <property type="match status" value="1"/>
</dbReference>
<dbReference type="SUPFAM" id="SSF47973">
    <property type="entry name" value="Ribosomal protein S7"/>
    <property type="match status" value="1"/>
</dbReference>
<dbReference type="PROSITE" id="PS00052">
    <property type="entry name" value="RIBOSOMAL_S7"/>
    <property type="match status" value="1"/>
</dbReference>
<evidence type="ECO:0000255" key="1">
    <source>
        <dbReference type="HAMAP-Rule" id="MF_00480"/>
    </source>
</evidence>
<evidence type="ECO:0000305" key="2"/>
<gene>
    <name evidence="1" type="primary">rpsG</name>
    <name type="ordered locus">R01352</name>
    <name type="ORF">SMc01313</name>
</gene>
<comment type="function">
    <text evidence="1">One of the primary rRNA binding proteins, it binds directly to 16S rRNA where it nucleates assembly of the head domain of the 30S subunit. Is located at the subunit interface close to the decoding center, probably blocks exit of the E-site tRNA.</text>
</comment>
<comment type="subunit">
    <text evidence="1">Part of the 30S ribosomal subunit. Contacts proteins S9 and S11.</text>
</comment>
<comment type="similarity">
    <text evidence="1">Belongs to the universal ribosomal protein uS7 family.</text>
</comment>
<reference key="1">
    <citation type="journal article" date="2001" name="Proc. Natl. Acad. Sci. U.S.A.">
        <title>Analysis of the chromosome sequence of the legume symbiont Sinorhizobium meliloti strain 1021.</title>
        <authorList>
            <person name="Capela D."/>
            <person name="Barloy-Hubler F."/>
            <person name="Gouzy J."/>
            <person name="Bothe G."/>
            <person name="Ampe F."/>
            <person name="Batut J."/>
            <person name="Boistard P."/>
            <person name="Becker A."/>
            <person name="Boutry M."/>
            <person name="Cadieu E."/>
            <person name="Dreano S."/>
            <person name="Gloux S."/>
            <person name="Godrie T."/>
            <person name="Goffeau A."/>
            <person name="Kahn D."/>
            <person name="Kiss E."/>
            <person name="Lelaure V."/>
            <person name="Masuy D."/>
            <person name="Pohl T."/>
            <person name="Portetelle D."/>
            <person name="Puehler A."/>
            <person name="Purnelle B."/>
            <person name="Ramsperger U."/>
            <person name="Renard C."/>
            <person name="Thebault P."/>
            <person name="Vandenbol M."/>
            <person name="Weidner S."/>
            <person name="Galibert F."/>
        </authorList>
    </citation>
    <scope>NUCLEOTIDE SEQUENCE [LARGE SCALE GENOMIC DNA]</scope>
    <source>
        <strain>1021</strain>
    </source>
</reference>
<reference key="2">
    <citation type="journal article" date="2001" name="Science">
        <title>The composite genome of the legume symbiont Sinorhizobium meliloti.</title>
        <authorList>
            <person name="Galibert F."/>
            <person name="Finan T.M."/>
            <person name="Long S.R."/>
            <person name="Puehler A."/>
            <person name="Abola P."/>
            <person name="Ampe F."/>
            <person name="Barloy-Hubler F."/>
            <person name="Barnett M.J."/>
            <person name="Becker A."/>
            <person name="Boistard P."/>
            <person name="Bothe G."/>
            <person name="Boutry M."/>
            <person name="Bowser L."/>
            <person name="Buhrmester J."/>
            <person name="Cadieu E."/>
            <person name="Capela D."/>
            <person name="Chain P."/>
            <person name="Cowie A."/>
            <person name="Davis R.W."/>
            <person name="Dreano S."/>
            <person name="Federspiel N.A."/>
            <person name="Fisher R.F."/>
            <person name="Gloux S."/>
            <person name="Godrie T."/>
            <person name="Goffeau A."/>
            <person name="Golding B."/>
            <person name="Gouzy J."/>
            <person name="Gurjal M."/>
            <person name="Hernandez-Lucas I."/>
            <person name="Hong A."/>
            <person name="Huizar L."/>
            <person name="Hyman R.W."/>
            <person name="Jones T."/>
            <person name="Kahn D."/>
            <person name="Kahn M.L."/>
            <person name="Kalman S."/>
            <person name="Keating D.H."/>
            <person name="Kiss E."/>
            <person name="Komp C."/>
            <person name="Lelaure V."/>
            <person name="Masuy D."/>
            <person name="Palm C."/>
            <person name="Peck M.C."/>
            <person name="Pohl T.M."/>
            <person name="Portetelle D."/>
            <person name="Purnelle B."/>
            <person name="Ramsperger U."/>
            <person name="Surzycki R."/>
            <person name="Thebault P."/>
            <person name="Vandenbol M."/>
            <person name="Vorhoelter F.J."/>
            <person name="Weidner S."/>
            <person name="Wells D.H."/>
            <person name="Wong K."/>
            <person name="Yeh K.-C."/>
            <person name="Batut J."/>
        </authorList>
    </citation>
    <scope>NUCLEOTIDE SEQUENCE [LARGE SCALE GENOMIC DNA]</scope>
    <source>
        <strain>1021</strain>
    </source>
</reference>
<accession>Q92QH3</accession>
<keyword id="KW-1185">Reference proteome</keyword>
<keyword id="KW-0687">Ribonucleoprotein</keyword>
<keyword id="KW-0689">Ribosomal protein</keyword>
<keyword id="KW-0694">RNA-binding</keyword>
<keyword id="KW-0699">rRNA-binding</keyword>
<keyword id="KW-0820">tRNA-binding</keyword>
<proteinExistence type="inferred from homology"/>
<sequence length="156" mass="17736">MSRRHRAEKREINPDPKFGDLVVTKFMNAIMLHGKKSVAESIVYGAFDAVQSKLKQEPVAVFHSALDNIAPHVEVRSRRVGGATYQVPVDVRPERRQALAIRWLIAAARKRNETTMVDRLCGELMDAANNRGSAVKKREDTHKMADANRAFSHYRW</sequence>
<protein>
    <recommendedName>
        <fullName evidence="1">Small ribosomal subunit protein uS7</fullName>
    </recommendedName>
    <alternativeName>
        <fullName evidence="2">30S ribosomal protein S7</fullName>
    </alternativeName>
</protein>
<name>RS7_RHIME</name>